<evidence type="ECO:0000250" key="1"/>
<evidence type="ECO:0000305" key="2"/>
<feature type="chain" id="PRO_0000170747" description="D-mannonate oxidoreductase">
    <location>
        <begin position="1"/>
        <end position="486"/>
    </location>
</feature>
<feature type="binding site" evidence="1">
    <location>
        <begin position="25"/>
        <end position="36"/>
    </location>
    <ligand>
        <name>NAD(+)</name>
        <dbReference type="ChEBI" id="CHEBI:57540"/>
    </ligand>
</feature>
<sequence>MTTIVDSNLPVARPSWDHSRLESRIVHLGCGAFHRAHQALYTHHLLESTDSDWGICEVNLMPGNDRVLIENLKKQQLLYTVAEKGAESTELKIIGSMKEALHPEIDGCEGILNAMARPQTAIVSLTVTEKGYCADAASGQLDLNNPLIKHDLENPTAPKSAIGYIVEALRLRREKGLKAFTVMSCDNVRENGHVAKVAVLGLAQARDPQLAAWIEENVTFPCTMVDRIVPAATPETLQEIADQLGVYDPCAIACEPFRQWVIEDNFVNGRPDWDKVGAQFVADVVPFEMMKLRMLNGSHSFLAYLGYLGGYETIADTVTNPAYRKAAFALMMQEQAPTLSMPEGTDLNAYATLLIERFSNPSLRHRTWQIAMDGSQKLPQRLLDPVRLHLQNGGSWRHLALGVAGWMRYTQGVDEQGNAIDVVDPMLAEFQKINAQYQGADRVKALLGLSGIFADDLPQNADFVGAVTAAYQQLCERGARECVAAL</sequence>
<comment type="catalytic activity">
    <reaction>
        <text>D-mannonate + NAD(+) = keto-D-fructuronate + NADH + H(+)</text>
        <dbReference type="Rhea" id="RHEA:15729"/>
        <dbReference type="ChEBI" id="CHEBI:15378"/>
        <dbReference type="ChEBI" id="CHEBI:17767"/>
        <dbReference type="ChEBI" id="CHEBI:57540"/>
        <dbReference type="ChEBI" id="CHEBI:57945"/>
        <dbReference type="ChEBI" id="CHEBI:59881"/>
        <dbReference type="EC" id="1.1.1.57"/>
    </reaction>
</comment>
<comment type="pathway">
    <text>Carbohydrate metabolism; pentose and glucuronate interconversion.</text>
</comment>
<comment type="similarity">
    <text evidence="2">Belongs to the mannitol dehydrogenase family. UxuB subfamily.</text>
</comment>
<organism>
    <name type="scientific">Escherichia coli (strain K12)</name>
    <dbReference type="NCBI Taxonomy" id="83333"/>
    <lineage>
        <taxon>Bacteria</taxon>
        <taxon>Pseudomonadati</taxon>
        <taxon>Pseudomonadota</taxon>
        <taxon>Gammaproteobacteria</taxon>
        <taxon>Enterobacterales</taxon>
        <taxon>Enterobacteriaceae</taxon>
        <taxon>Escherichia</taxon>
    </lineage>
</organism>
<keyword id="KW-0520">NAD</keyword>
<keyword id="KW-0560">Oxidoreductase</keyword>
<keyword id="KW-1185">Reference proteome</keyword>
<name>UXUB_ECOLI</name>
<accession>P39160</accession>
<accession>Q2M5Z0</accession>
<dbReference type="EC" id="1.1.1.57"/>
<dbReference type="EMBL" id="D13329">
    <property type="protein sequence ID" value="BAA02591.1"/>
    <property type="molecule type" value="Genomic_DNA"/>
</dbReference>
<dbReference type="EMBL" id="U14003">
    <property type="protein sequence ID" value="AAA97219.1"/>
    <property type="molecule type" value="Genomic_DNA"/>
</dbReference>
<dbReference type="EMBL" id="U00096">
    <property type="protein sequence ID" value="AAC77279.1"/>
    <property type="molecule type" value="Genomic_DNA"/>
</dbReference>
<dbReference type="EMBL" id="AP009048">
    <property type="protein sequence ID" value="BAE78316.1"/>
    <property type="molecule type" value="Genomic_DNA"/>
</dbReference>
<dbReference type="PIR" id="S56548">
    <property type="entry name" value="S56548"/>
</dbReference>
<dbReference type="RefSeq" id="NP_418743.1">
    <property type="nucleotide sequence ID" value="NC_000913.3"/>
</dbReference>
<dbReference type="RefSeq" id="WP_000208205.1">
    <property type="nucleotide sequence ID" value="NZ_LN832404.1"/>
</dbReference>
<dbReference type="SMR" id="P39160"/>
<dbReference type="BioGRID" id="4260999">
    <property type="interactions" value="8"/>
</dbReference>
<dbReference type="DIP" id="DIP-11109N"/>
<dbReference type="FunCoup" id="P39160">
    <property type="interactions" value="105"/>
</dbReference>
<dbReference type="IntAct" id="P39160">
    <property type="interactions" value="3"/>
</dbReference>
<dbReference type="STRING" id="511145.b4323"/>
<dbReference type="jPOST" id="P39160"/>
<dbReference type="PaxDb" id="511145-b4323"/>
<dbReference type="EnsemblBacteria" id="AAC77279">
    <property type="protein sequence ID" value="AAC77279"/>
    <property type="gene ID" value="b4323"/>
</dbReference>
<dbReference type="GeneID" id="946795"/>
<dbReference type="KEGG" id="ecj:JW4286"/>
<dbReference type="KEGG" id="eco:b4323"/>
<dbReference type="KEGG" id="ecoc:C3026_23355"/>
<dbReference type="PATRIC" id="fig|1411691.4.peg.2369"/>
<dbReference type="EchoBASE" id="EB4150"/>
<dbReference type="eggNOG" id="COG0246">
    <property type="taxonomic scope" value="Bacteria"/>
</dbReference>
<dbReference type="HOGENOM" id="CLU_027324_0_1_6"/>
<dbReference type="InParanoid" id="P39160"/>
<dbReference type="OMA" id="IVASWAR"/>
<dbReference type="OrthoDB" id="271711at2"/>
<dbReference type="PhylomeDB" id="P39160"/>
<dbReference type="BioCyc" id="EcoCyc:MANNONOXIDOREDUCT-MONOMER"/>
<dbReference type="BioCyc" id="MetaCyc:MANNONOXIDOREDUCT-MONOMER"/>
<dbReference type="UniPathway" id="UPA00246"/>
<dbReference type="PRO" id="PR:P39160"/>
<dbReference type="Proteomes" id="UP000000625">
    <property type="component" value="Chromosome"/>
</dbReference>
<dbReference type="GO" id="GO:0008866">
    <property type="term" value="F:fructuronate reductase activity"/>
    <property type="evidence" value="ECO:0000315"/>
    <property type="project" value="CACAO"/>
</dbReference>
<dbReference type="GO" id="GO:0042840">
    <property type="term" value="P:D-glucuronate catabolic process"/>
    <property type="evidence" value="ECO:0000315"/>
    <property type="project" value="EcoCyc"/>
</dbReference>
<dbReference type="GO" id="GO:0019594">
    <property type="term" value="P:mannitol metabolic process"/>
    <property type="evidence" value="ECO:0007669"/>
    <property type="project" value="InterPro"/>
</dbReference>
<dbReference type="FunFam" id="3.40.50.720:FF:000129">
    <property type="entry name" value="D-mannonate oxidoreductase"/>
    <property type="match status" value="1"/>
</dbReference>
<dbReference type="FunFam" id="1.10.1040.10:FF:000020">
    <property type="entry name" value="D-mannonate oxidoreductase, NAD-binding"/>
    <property type="match status" value="1"/>
</dbReference>
<dbReference type="Gene3D" id="1.10.1040.10">
    <property type="entry name" value="N-(1-d-carboxylethyl)-l-norvaline Dehydrogenase, domain 2"/>
    <property type="match status" value="1"/>
</dbReference>
<dbReference type="Gene3D" id="3.40.50.720">
    <property type="entry name" value="NAD(P)-binding Rossmann-like Domain"/>
    <property type="match status" value="1"/>
</dbReference>
<dbReference type="InterPro" id="IPR008927">
    <property type="entry name" value="6-PGluconate_DH-like_C_sf"/>
</dbReference>
<dbReference type="InterPro" id="IPR013328">
    <property type="entry name" value="6PGD_dom2"/>
</dbReference>
<dbReference type="InterPro" id="IPR000669">
    <property type="entry name" value="Mannitol_DH"/>
</dbReference>
<dbReference type="InterPro" id="IPR050988">
    <property type="entry name" value="Mannitol_DH/Oxidoreductase"/>
</dbReference>
<dbReference type="InterPro" id="IPR013118">
    <property type="entry name" value="Mannitol_DH_C"/>
</dbReference>
<dbReference type="InterPro" id="IPR023027">
    <property type="entry name" value="Mannitol_DH_CS"/>
</dbReference>
<dbReference type="InterPro" id="IPR013131">
    <property type="entry name" value="Mannitol_DH_N"/>
</dbReference>
<dbReference type="InterPro" id="IPR036291">
    <property type="entry name" value="NAD(P)-bd_dom_sf"/>
</dbReference>
<dbReference type="NCBIfam" id="NF011611">
    <property type="entry name" value="PRK15037.1"/>
    <property type="match status" value="1"/>
</dbReference>
<dbReference type="PANTHER" id="PTHR43362:SF7">
    <property type="entry name" value="D-MANNONATE OXIDOREDUCTASE"/>
    <property type="match status" value="1"/>
</dbReference>
<dbReference type="PANTHER" id="PTHR43362">
    <property type="entry name" value="MANNITOL DEHYDROGENASE DSF1-RELATED"/>
    <property type="match status" value="1"/>
</dbReference>
<dbReference type="Pfam" id="PF01232">
    <property type="entry name" value="Mannitol_dh"/>
    <property type="match status" value="1"/>
</dbReference>
<dbReference type="Pfam" id="PF08125">
    <property type="entry name" value="Mannitol_dh_C"/>
    <property type="match status" value="1"/>
</dbReference>
<dbReference type="PRINTS" id="PR00084">
    <property type="entry name" value="MTLDHDRGNASE"/>
</dbReference>
<dbReference type="SUPFAM" id="SSF48179">
    <property type="entry name" value="6-phosphogluconate dehydrogenase C-terminal domain-like"/>
    <property type="match status" value="1"/>
</dbReference>
<dbReference type="SUPFAM" id="SSF51735">
    <property type="entry name" value="NAD(P)-binding Rossmann-fold domains"/>
    <property type="match status" value="1"/>
</dbReference>
<dbReference type="PROSITE" id="PS00974">
    <property type="entry name" value="MANNITOL_DHGENASE"/>
    <property type="match status" value="1"/>
</dbReference>
<gene>
    <name type="primary">uxuB</name>
    <name type="ordered locus">b4323</name>
    <name type="ordered locus">JW4286</name>
</gene>
<reference key="1">
    <citation type="submission" date="1992-09" db="EMBL/GenBank/DDBJ databases">
        <authorList>
            <person name="Mizobuchi K."/>
        </authorList>
    </citation>
    <scope>NUCLEOTIDE SEQUENCE [GENOMIC DNA]</scope>
    <source>
        <strain>K12 / W3110 / ATCC 27325 / DSM 5911</strain>
    </source>
</reference>
<reference key="2">
    <citation type="journal article" date="1995" name="Nucleic Acids Res.">
        <title>Analysis of the Escherichia coli genome VI: DNA sequence of the region from 92.8 through 100 minutes.</title>
        <authorList>
            <person name="Burland V.D."/>
            <person name="Plunkett G. III"/>
            <person name="Sofia H.J."/>
            <person name="Daniels D.L."/>
            <person name="Blattner F.R."/>
        </authorList>
    </citation>
    <scope>NUCLEOTIDE SEQUENCE [LARGE SCALE GENOMIC DNA]</scope>
    <source>
        <strain>K12 / MG1655 / ATCC 47076</strain>
    </source>
</reference>
<reference key="3">
    <citation type="journal article" date="1997" name="Science">
        <title>The complete genome sequence of Escherichia coli K-12.</title>
        <authorList>
            <person name="Blattner F.R."/>
            <person name="Plunkett G. III"/>
            <person name="Bloch C.A."/>
            <person name="Perna N.T."/>
            <person name="Burland V."/>
            <person name="Riley M."/>
            <person name="Collado-Vides J."/>
            <person name="Glasner J.D."/>
            <person name="Rode C.K."/>
            <person name="Mayhew G.F."/>
            <person name="Gregor J."/>
            <person name="Davis N.W."/>
            <person name="Kirkpatrick H.A."/>
            <person name="Goeden M.A."/>
            <person name="Rose D.J."/>
            <person name="Mau B."/>
            <person name="Shao Y."/>
        </authorList>
    </citation>
    <scope>NUCLEOTIDE SEQUENCE [LARGE SCALE GENOMIC DNA]</scope>
    <source>
        <strain>K12 / MG1655 / ATCC 47076</strain>
    </source>
</reference>
<reference key="4">
    <citation type="journal article" date="2006" name="Mol. Syst. Biol.">
        <title>Highly accurate genome sequences of Escherichia coli K-12 strains MG1655 and W3110.</title>
        <authorList>
            <person name="Hayashi K."/>
            <person name="Morooka N."/>
            <person name="Yamamoto Y."/>
            <person name="Fujita K."/>
            <person name="Isono K."/>
            <person name="Choi S."/>
            <person name="Ohtsubo E."/>
            <person name="Baba T."/>
            <person name="Wanner B.L."/>
            <person name="Mori H."/>
            <person name="Horiuchi T."/>
        </authorList>
    </citation>
    <scope>NUCLEOTIDE SEQUENCE [LARGE SCALE GENOMIC DNA]</scope>
    <source>
        <strain>K12 / W3110 / ATCC 27325 / DSM 5911</strain>
    </source>
</reference>
<protein>
    <recommendedName>
        <fullName>D-mannonate oxidoreductase</fullName>
        <ecNumber>1.1.1.57</ecNumber>
    </recommendedName>
    <alternativeName>
        <fullName>Fructuronate reductase</fullName>
    </alternativeName>
</protein>
<proteinExistence type="inferred from homology"/>